<dbReference type="EMBL" id="Y11819">
    <property type="protein sequence ID" value="CAA72504.1"/>
    <property type="molecule type" value="Genomic_DNA"/>
</dbReference>
<dbReference type="EMBL" id="Y11818">
    <property type="protein sequence ID" value="CAA72503.1"/>
    <property type="molecule type" value="Genomic_DNA"/>
</dbReference>
<dbReference type="EMBL" id="U57905">
    <property type="protein sequence ID" value="AAB49194.1"/>
    <property type="molecule type" value="Genomic_DNA"/>
</dbReference>
<dbReference type="SMR" id="P97195"/>
<dbReference type="STRING" id="486.B2G52_09295"/>
<dbReference type="GO" id="GO:0005829">
    <property type="term" value="C:cytosol"/>
    <property type="evidence" value="ECO:0007669"/>
    <property type="project" value="TreeGrafter"/>
</dbReference>
<dbReference type="GO" id="GO:0005524">
    <property type="term" value="F:ATP binding"/>
    <property type="evidence" value="ECO:0007669"/>
    <property type="project" value="UniProtKB-KW"/>
</dbReference>
<dbReference type="GO" id="GO:0016887">
    <property type="term" value="F:ATP hydrolysis activity"/>
    <property type="evidence" value="ECO:0007669"/>
    <property type="project" value="InterPro"/>
</dbReference>
<dbReference type="GO" id="GO:0140664">
    <property type="term" value="F:ATP-dependent DNA damage sensor activity"/>
    <property type="evidence" value="ECO:0007669"/>
    <property type="project" value="InterPro"/>
</dbReference>
<dbReference type="GO" id="GO:0003697">
    <property type="term" value="F:single-stranded DNA binding"/>
    <property type="evidence" value="ECO:0007669"/>
    <property type="project" value="InterPro"/>
</dbReference>
<dbReference type="GO" id="GO:0006310">
    <property type="term" value="P:DNA recombination"/>
    <property type="evidence" value="ECO:0007669"/>
    <property type="project" value="UniProtKB-KW"/>
</dbReference>
<dbReference type="GO" id="GO:0006281">
    <property type="term" value="P:DNA repair"/>
    <property type="evidence" value="ECO:0007669"/>
    <property type="project" value="UniProtKB-KW"/>
</dbReference>
<dbReference type="GO" id="GO:0009432">
    <property type="term" value="P:SOS response"/>
    <property type="evidence" value="ECO:0007669"/>
    <property type="project" value="UniProtKB-KW"/>
</dbReference>
<dbReference type="CDD" id="cd00983">
    <property type="entry name" value="RecA"/>
    <property type="match status" value="1"/>
</dbReference>
<dbReference type="FunFam" id="3.40.50.300:FF:000087">
    <property type="entry name" value="Recombinase RecA"/>
    <property type="match status" value="1"/>
</dbReference>
<dbReference type="Gene3D" id="3.40.50.300">
    <property type="entry name" value="P-loop containing nucleotide triphosphate hydrolases"/>
    <property type="match status" value="1"/>
</dbReference>
<dbReference type="HAMAP" id="MF_00268">
    <property type="entry name" value="RecA"/>
    <property type="match status" value="1"/>
</dbReference>
<dbReference type="InterPro" id="IPR003593">
    <property type="entry name" value="AAA+_ATPase"/>
</dbReference>
<dbReference type="InterPro" id="IPR013765">
    <property type="entry name" value="DNA_recomb/repair_RecA"/>
</dbReference>
<dbReference type="InterPro" id="IPR020584">
    <property type="entry name" value="DNA_recomb/repair_RecA_CS"/>
</dbReference>
<dbReference type="InterPro" id="IPR027417">
    <property type="entry name" value="P-loop_NTPase"/>
</dbReference>
<dbReference type="InterPro" id="IPR049261">
    <property type="entry name" value="RecA-like_C"/>
</dbReference>
<dbReference type="InterPro" id="IPR049428">
    <property type="entry name" value="RecA-like_N"/>
</dbReference>
<dbReference type="InterPro" id="IPR020588">
    <property type="entry name" value="RecA_ATP-bd"/>
</dbReference>
<dbReference type="InterPro" id="IPR023400">
    <property type="entry name" value="RecA_C_sf"/>
</dbReference>
<dbReference type="InterPro" id="IPR020587">
    <property type="entry name" value="RecA_monomer-monomer_interface"/>
</dbReference>
<dbReference type="NCBIfam" id="TIGR02012">
    <property type="entry name" value="tigrfam_recA"/>
    <property type="match status" value="1"/>
</dbReference>
<dbReference type="PANTHER" id="PTHR45900:SF1">
    <property type="entry name" value="MITOCHONDRIAL DNA REPAIR PROTEIN RECA HOMOLOG-RELATED"/>
    <property type="match status" value="1"/>
</dbReference>
<dbReference type="PANTHER" id="PTHR45900">
    <property type="entry name" value="RECA"/>
    <property type="match status" value="1"/>
</dbReference>
<dbReference type="Pfam" id="PF00154">
    <property type="entry name" value="RecA"/>
    <property type="match status" value="1"/>
</dbReference>
<dbReference type="Pfam" id="PF21096">
    <property type="entry name" value="RecA_C"/>
    <property type="match status" value="1"/>
</dbReference>
<dbReference type="PRINTS" id="PR00142">
    <property type="entry name" value="RECA"/>
</dbReference>
<dbReference type="SMART" id="SM00382">
    <property type="entry name" value="AAA"/>
    <property type="match status" value="1"/>
</dbReference>
<dbReference type="SUPFAM" id="SSF52540">
    <property type="entry name" value="P-loop containing nucleoside triphosphate hydrolases"/>
    <property type="match status" value="1"/>
</dbReference>
<dbReference type="SUPFAM" id="SSF54752">
    <property type="entry name" value="RecA protein, C-terminal domain"/>
    <property type="match status" value="1"/>
</dbReference>
<dbReference type="PROSITE" id="PS00321">
    <property type="entry name" value="RECA_1"/>
    <property type="match status" value="1"/>
</dbReference>
<dbReference type="PROSITE" id="PS50162">
    <property type="entry name" value="RECA_2"/>
    <property type="match status" value="1"/>
</dbReference>
<dbReference type="PROSITE" id="PS50163">
    <property type="entry name" value="RECA_3"/>
    <property type="match status" value="1"/>
</dbReference>
<comment type="function">
    <text evidence="1">Can catalyze the hydrolysis of ATP in the presence of single-stranded DNA, the ATP-dependent uptake of single-stranded DNA by duplex DNA, and the ATP-dependent hybridization of homologous single-stranded DNAs. It interacts with LexA causing its activation and leading to its autocatalytic cleavage.</text>
</comment>
<comment type="subcellular location">
    <subcellularLocation>
        <location evidence="1">Cytoplasm</location>
    </subcellularLocation>
</comment>
<comment type="similarity">
    <text evidence="1">Belongs to the RecA family.</text>
</comment>
<sequence>AIMKMDGSQQEENLEVISTGSLGLDLALGVGGLPRGRIVEIFGPESSGKTTLCLEAVAQCQKNGGVCAFVDAEHAFDPVYARKLGVKVEELYLSQPDTGEQALEICDTLVRSGGIDMVVVDSVAALVPKAEIEGDMGDSHVGLQARLMSQALRKLTGHIKKTNTLVVFINQIRMKIGVMFGSPETTTGGNALKFYSSVRLDIRRTGSIKKGEEVLGNETRVKVIKNKVAPPFRQAEFDILYGEGISWEGELIDIGVKNDIINKSGAWYSYNGAK</sequence>
<name>RECA_NEILA</name>
<accession>P97195</accession>
<keyword id="KW-0067">ATP-binding</keyword>
<keyword id="KW-0963">Cytoplasm</keyword>
<keyword id="KW-0227">DNA damage</keyword>
<keyword id="KW-0233">DNA recombination</keyword>
<keyword id="KW-0234">DNA repair</keyword>
<keyword id="KW-0238">DNA-binding</keyword>
<keyword id="KW-0547">Nucleotide-binding</keyword>
<keyword id="KW-0742">SOS response</keyword>
<reference key="1">
    <citation type="journal article" date="1996" name="J. Mol. Evol.">
        <title>A comparison of the nucleotide sequences of the adk and recA genes of pathogenic and commensal Neisseria species: evidence for extensive interspecies recombination within adk.</title>
        <authorList>
            <person name="Feil E."/>
            <person name="Zhou J."/>
            <person name="Maynard Smith J."/>
            <person name="Spratt B.G."/>
        </authorList>
    </citation>
    <scope>NUCLEOTIDE SEQUENCE [GENOMIC DNA]</scope>
    <source>
        <strain>ATCC 23970 / DSM 4691 / CCUG 5853 / CIP 72.17 / NCTC 10617 / NCDC A7515</strain>
    </source>
</reference>
<reference key="2">
    <citation type="submission" date="1997-03" db="EMBL/GenBank/DDBJ databases">
        <authorList>
            <person name="Smith N.H."/>
        </authorList>
    </citation>
    <scope>NUCLEOTIDE SEQUENCE [GENOMIC DNA] OF 18-254</scope>
    <source>
        <strain>CCUG 7852</strain>
        <strain>LCDC 77-143</strain>
    </source>
</reference>
<protein>
    <recommendedName>
        <fullName evidence="1">Protein RecA</fullName>
    </recommendedName>
    <alternativeName>
        <fullName evidence="1">Recombinase A</fullName>
    </alternativeName>
</protein>
<evidence type="ECO:0000255" key="1">
    <source>
        <dbReference type="HAMAP-Rule" id="MF_00268"/>
    </source>
</evidence>
<gene>
    <name evidence="1" type="primary">recA</name>
</gene>
<feature type="chain" id="PRO_0000122776" description="Protein RecA">
    <location>
        <begin position="1" status="less than"/>
        <end position="274" status="greater than"/>
    </location>
</feature>
<feature type="binding site" evidence="1">
    <location>
        <begin position="43"/>
        <end position="50"/>
    </location>
    <ligand>
        <name>ATP</name>
        <dbReference type="ChEBI" id="CHEBI:30616"/>
    </ligand>
</feature>
<feature type="sequence variant" description="In strain: P63.">
    <original>I</original>
    <variation>V</variation>
    <location>
        <position position="115"/>
    </location>
</feature>
<feature type="non-terminal residue">
    <location>
        <position position="1"/>
    </location>
</feature>
<feature type="non-terminal residue">
    <location>
        <position position="274"/>
    </location>
</feature>
<organism>
    <name type="scientific">Neisseria lactamica</name>
    <dbReference type="NCBI Taxonomy" id="486"/>
    <lineage>
        <taxon>Bacteria</taxon>
        <taxon>Pseudomonadati</taxon>
        <taxon>Pseudomonadota</taxon>
        <taxon>Betaproteobacteria</taxon>
        <taxon>Neisseriales</taxon>
        <taxon>Neisseriaceae</taxon>
        <taxon>Neisseria</taxon>
    </lineage>
</organism>
<proteinExistence type="inferred from homology"/>